<gene>
    <name type="ordered locus">Psyr_4150</name>
</gene>
<reference key="1">
    <citation type="journal article" date="2005" name="Proc. Natl. Acad. Sci. U.S.A.">
        <title>Comparison of the complete genome sequences of Pseudomonas syringae pv. syringae B728a and pv. tomato DC3000.</title>
        <authorList>
            <person name="Feil H."/>
            <person name="Feil W.S."/>
            <person name="Chain P."/>
            <person name="Larimer F."/>
            <person name="Dibartolo G."/>
            <person name="Copeland A."/>
            <person name="Lykidis A."/>
            <person name="Trong S."/>
            <person name="Nolan M."/>
            <person name="Goltsman E."/>
            <person name="Thiel J."/>
            <person name="Malfatti S."/>
            <person name="Loper J.E."/>
            <person name="Lapidus A."/>
            <person name="Detter J.C."/>
            <person name="Land M."/>
            <person name="Richardson P.M."/>
            <person name="Kyrpides N.C."/>
            <person name="Ivanova N."/>
            <person name="Lindow S.E."/>
        </authorList>
    </citation>
    <scope>NUCLEOTIDE SEQUENCE [LARGE SCALE GENOMIC DNA]</scope>
    <source>
        <strain>B728a</strain>
    </source>
</reference>
<accession>Q4ZNU2</accession>
<feature type="chain" id="PRO_0000258984" description="Nucleotide-binding protein Psyr_4150">
    <location>
        <begin position="1"/>
        <end position="285"/>
    </location>
</feature>
<feature type="binding site" evidence="1">
    <location>
        <begin position="8"/>
        <end position="15"/>
    </location>
    <ligand>
        <name>ATP</name>
        <dbReference type="ChEBI" id="CHEBI:30616"/>
    </ligand>
</feature>
<feature type="binding site" evidence="1">
    <location>
        <begin position="60"/>
        <end position="63"/>
    </location>
    <ligand>
        <name>GTP</name>
        <dbReference type="ChEBI" id="CHEBI:37565"/>
    </ligand>
</feature>
<dbReference type="EMBL" id="CP000075">
    <property type="protein sequence ID" value="AAY39180.1"/>
    <property type="molecule type" value="Genomic_DNA"/>
</dbReference>
<dbReference type="RefSeq" id="YP_237218.1">
    <property type="nucleotide sequence ID" value="NC_007005.1"/>
</dbReference>
<dbReference type="SMR" id="Q4ZNU2"/>
<dbReference type="STRING" id="205918.Psyr_4150"/>
<dbReference type="KEGG" id="psb:Psyr_4150"/>
<dbReference type="PATRIC" id="fig|205918.7.peg.4270"/>
<dbReference type="eggNOG" id="COG1660">
    <property type="taxonomic scope" value="Bacteria"/>
</dbReference>
<dbReference type="HOGENOM" id="CLU_059558_1_1_6"/>
<dbReference type="OrthoDB" id="9784461at2"/>
<dbReference type="Proteomes" id="UP000000426">
    <property type="component" value="Chromosome"/>
</dbReference>
<dbReference type="GO" id="GO:0005524">
    <property type="term" value="F:ATP binding"/>
    <property type="evidence" value="ECO:0007669"/>
    <property type="project" value="UniProtKB-UniRule"/>
</dbReference>
<dbReference type="GO" id="GO:0005525">
    <property type="term" value="F:GTP binding"/>
    <property type="evidence" value="ECO:0007669"/>
    <property type="project" value="UniProtKB-UniRule"/>
</dbReference>
<dbReference type="HAMAP" id="MF_00636">
    <property type="entry name" value="RapZ_like"/>
    <property type="match status" value="1"/>
</dbReference>
<dbReference type="InterPro" id="IPR027417">
    <property type="entry name" value="P-loop_NTPase"/>
</dbReference>
<dbReference type="InterPro" id="IPR005337">
    <property type="entry name" value="RapZ-like"/>
</dbReference>
<dbReference type="InterPro" id="IPR053930">
    <property type="entry name" value="RapZ-like_N"/>
</dbReference>
<dbReference type="InterPro" id="IPR053931">
    <property type="entry name" value="RapZ_C"/>
</dbReference>
<dbReference type="NCBIfam" id="NF003828">
    <property type="entry name" value="PRK05416.1"/>
    <property type="match status" value="1"/>
</dbReference>
<dbReference type="PANTHER" id="PTHR30448">
    <property type="entry name" value="RNASE ADAPTER PROTEIN RAPZ"/>
    <property type="match status" value="1"/>
</dbReference>
<dbReference type="PANTHER" id="PTHR30448:SF0">
    <property type="entry name" value="RNASE ADAPTER PROTEIN RAPZ"/>
    <property type="match status" value="1"/>
</dbReference>
<dbReference type="Pfam" id="PF22740">
    <property type="entry name" value="PapZ_C"/>
    <property type="match status" value="1"/>
</dbReference>
<dbReference type="Pfam" id="PF03668">
    <property type="entry name" value="RapZ-like_N"/>
    <property type="match status" value="1"/>
</dbReference>
<dbReference type="PIRSF" id="PIRSF005052">
    <property type="entry name" value="P-loopkin"/>
    <property type="match status" value="1"/>
</dbReference>
<dbReference type="SUPFAM" id="SSF52540">
    <property type="entry name" value="P-loop containing nucleoside triphosphate hydrolases"/>
    <property type="match status" value="1"/>
</dbReference>
<organism>
    <name type="scientific">Pseudomonas syringae pv. syringae (strain B728a)</name>
    <dbReference type="NCBI Taxonomy" id="205918"/>
    <lineage>
        <taxon>Bacteria</taxon>
        <taxon>Pseudomonadati</taxon>
        <taxon>Pseudomonadota</taxon>
        <taxon>Gammaproteobacteria</taxon>
        <taxon>Pseudomonadales</taxon>
        <taxon>Pseudomonadaceae</taxon>
        <taxon>Pseudomonas</taxon>
        <taxon>Pseudomonas syringae</taxon>
    </lineage>
</organism>
<sequence length="285" mass="32221">MRMIIVSGRSGSGKSTALDVLEDNGFYCVDNLPAGLLPELAERALINTELAEPLLAVSIDARNLPSHLTRFPQMLSEVRLRNIQCDVLYLDADEATLLKRFSETRRRHPLSTADRSLAEAIRDETALLGPIIDLADLKINTTHLNLYQLRDALKLRLLNKPEPGTAFLIESFGFKRGMPVDADLVFDVRCLPNPYWKPELRDHSGLEQPVIDYLSVQPDVEEMFQDIFAYLNKWLPRFAASNRSYVTIAIGCTGGHHRSVYLTERLGQVLQQSLKNVQVRHRDLS</sequence>
<keyword id="KW-0067">ATP-binding</keyword>
<keyword id="KW-0342">GTP-binding</keyword>
<keyword id="KW-0547">Nucleotide-binding</keyword>
<evidence type="ECO:0000255" key="1">
    <source>
        <dbReference type="HAMAP-Rule" id="MF_00636"/>
    </source>
</evidence>
<name>Y4150_PSEU2</name>
<comment type="function">
    <text evidence="1">Displays ATPase and GTPase activities.</text>
</comment>
<comment type="similarity">
    <text evidence="1">Belongs to the RapZ-like family.</text>
</comment>
<protein>
    <recommendedName>
        <fullName evidence="1">Nucleotide-binding protein Psyr_4150</fullName>
    </recommendedName>
</protein>
<proteinExistence type="inferred from homology"/>